<reference key="1">
    <citation type="submission" date="2008-02" db="EMBL/GenBank/DDBJ databases">
        <title>Complete sequence of Escherichia coli C str. ATCC 8739.</title>
        <authorList>
            <person name="Copeland A."/>
            <person name="Lucas S."/>
            <person name="Lapidus A."/>
            <person name="Glavina del Rio T."/>
            <person name="Dalin E."/>
            <person name="Tice H."/>
            <person name="Bruce D."/>
            <person name="Goodwin L."/>
            <person name="Pitluck S."/>
            <person name="Kiss H."/>
            <person name="Brettin T."/>
            <person name="Detter J.C."/>
            <person name="Han C."/>
            <person name="Kuske C.R."/>
            <person name="Schmutz J."/>
            <person name="Larimer F."/>
            <person name="Land M."/>
            <person name="Hauser L."/>
            <person name="Kyrpides N."/>
            <person name="Mikhailova N."/>
            <person name="Ingram L."/>
            <person name="Richardson P."/>
        </authorList>
    </citation>
    <scope>NUCLEOTIDE SEQUENCE [LARGE SCALE GENOMIC DNA]</scope>
    <source>
        <strain>ATCC 8739 / DSM 1576 / NBRC 3972 / NCIMB 8545 / WDCM 00012 / Crooks</strain>
    </source>
</reference>
<proteinExistence type="inferred from homology"/>
<organism>
    <name type="scientific">Escherichia coli (strain ATCC 8739 / DSM 1576 / NBRC 3972 / NCIMB 8545 / WDCM 00012 / Crooks)</name>
    <dbReference type="NCBI Taxonomy" id="481805"/>
    <lineage>
        <taxon>Bacteria</taxon>
        <taxon>Pseudomonadati</taxon>
        <taxon>Pseudomonadota</taxon>
        <taxon>Gammaproteobacteria</taxon>
        <taxon>Enterobacterales</taxon>
        <taxon>Enterobacteriaceae</taxon>
        <taxon>Escherichia</taxon>
    </lineage>
</organism>
<accession>B1IVM5</accession>
<comment type="function">
    <text evidence="1">An accessory protein needed during the final step in the assembly of 30S ribosomal subunit, possibly for assembly of the head region. Essential for efficient processing of 16S rRNA. May be needed both before and after RbfA during the maturation of 16S rRNA. It has affinity for free ribosomal 30S subunits but not for 70S ribosomes.</text>
</comment>
<comment type="subunit">
    <text evidence="1">Binds ribosomal protein uS19.</text>
</comment>
<comment type="subcellular location">
    <subcellularLocation>
        <location evidence="1">Cytoplasm</location>
    </subcellularLocation>
</comment>
<comment type="domain">
    <text evidence="1">The PRC barrel domain binds ribosomal protein uS19.</text>
</comment>
<comment type="similarity">
    <text evidence="1">Belongs to the RimM family.</text>
</comment>
<keyword id="KW-0143">Chaperone</keyword>
<keyword id="KW-0963">Cytoplasm</keyword>
<keyword id="KW-0690">Ribosome biogenesis</keyword>
<keyword id="KW-0698">rRNA processing</keyword>
<dbReference type="EMBL" id="CP000946">
    <property type="protein sequence ID" value="ACA76742.1"/>
    <property type="molecule type" value="Genomic_DNA"/>
</dbReference>
<dbReference type="RefSeq" id="WP_000043335.1">
    <property type="nucleotide sequence ID" value="NZ_MTFT01000037.1"/>
</dbReference>
<dbReference type="SMR" id="B1IVM5"/>
<dbReference type="GeneID" id="93774458"/>
<dbReference type="KEGG" id="ecl:EcolC_1075"/>
<dbReference type="HOGENOM" id="CLU_077636_1_0_6"/>
<dbReference type="GO" id="GO:0005737">
    <property type="term" value="C:cytoplasm"/>
    <property type="evidence" value="ECO:0007669"/>
    <property type="project" value="UniProtKB-SubCell"/>
</dbReference>
<dbReference type="GO" id="GO:0005840">
    <property type="term" value="C:ribosome"/>
    <property type="evidence" value="ECO:0007669"/>
    <property type="project" value="InterPro"/>
</dbReference>
<dbReference type="GO" id="GO:0043022">
    <property type="term" value="F:ribosome binding"/>
    <property type="evidence" value="ECO:0007669"/>
    <property type="project" value="InterPro"/>
</dbReference>
<dbReference type="GO" id="GO:0042274">
    <property type="term" value="P:ribosomal small subunit biogenesis"/>
    <property type="evidence" value="ECO:0007669"/>
    <property type="project" value="UniProtKB-UniRule"/>
</dbReference>
<dbReference type="GO" id="GO:0006364">
    <property type="term" value="P:rRNA processing"/>
    <property type="evidence" value="ECO:0007669"/>
    <property type="project" value="UniProtKB-UniRule"/>
</dbReference>
<dbReference type="FunFam" id="2.30.30.240:FF:000001">
    <property type="entry name" value="Ribosome maturation factor RimM"/>
    <property type="match status" value="1"/>
</dbReference>
<dbReference type="FunFam" id="2.40.30.60:FF:000001">
    <property type="entry name" value="Ribosome maturation factor RimM"/>
    <property type="match status" value="1"/>
</dbReference>
<dbReference type="Gene3D" id="2.30.30.240">
    <property type="entry name" value="PRC-barrel domain"/>
    <property type="match status" value="1"/>
</dbReference>
<dbReference type="Gene3D" id="2.40.30.60">
    <property type="entry name" value="RimM"/>
    <property type="match status" value="1"/>
</dbReference>
<dbReference type="HAMAP" id="MF_00014">
    <property type="entry name" value="Ribosome_mat_RimM"/>
    <property type="match status" value="1"/>
</dbReference>
<dbReference type="InterPro" id="IPR011033">
    <property type="entry name" value="PRC_barrel-like_sf"/>
</dbReference>
<dbReference type="InterPro" id="IPR056792">
    <property type="entry name" value="PRC_RimM"/>
</dbReference>
<dbReference type="InterPro" id="IPR011961">
    <property type="entry name" value="RimM"/>
</dbReference>
<dbReference type="InterPro" id="IPR002676">
    <property type="entry name" value="RimM_N"/>
</dbReference>
<dbReference type="InterPro" id="IPR036976">
    <property type="entry name" value="RimM_N_sf"/>
</dbReference>
<dbReference type="InterPro" id="IPR009000">
    <property type="entry name" value="Transl_B-barrel_sf"/>
</dbReference>
<dbReference type="NCBIfam" id="TIGR02273">
    <property type="entry name" value="16S_RimM"/>
    <property type="match status" value="1"/>
</dbReference>
<dbReference type="PANTHER" id="PTHR33692">
    <property type="entry name" value="RIBOSOME MATURATION FACTOR RIMM"/>
    <property type="match status" value="1"/>
</dbReference>
<dbReference type="PANTHER" id="PTHR33692:SF1">
    <property type="entry name" value="RIBOSOME MATURATION FACTOR RIMM"/>
    <property type="match status" value="1"/>
</dbReference>
<dbReference type="Pfam" id="PF24986">
    <property type="entry name" value="PRC_RimM"/>
    <property type="match status" value="1"/>
</dbReference>
<dbReference type="Pfam" id="PF01782">
    <property type="entry name" value="RimM"/>
    <property type="match status" value="1"/>
</dbReference>
<dbReference type="SUPFAM" id="SSF50346">
    <property type="entry name" value="PRC-barrel domain"/>
    <property type="match status" value="1"/>
</dbReference>
<dbReference type="SUPFAM" id="SSF50447">
    <property type="entry name" value="Translation proteins"/>
    <property type="match status" value="1"/>
</dbReference>
<name>RIMM_ECOLC</name>
<protein>
    <recommendedName>
        <fullName evidence="1">Ribosome maturation factor RimM</fullName>
    </recommendedName>
</protein>
<evidence type="ECO:0000255" key="1">
    <source>
        <dbReference type="HAMAP-Rule" id="MF_00014"/>
    </source>
</evidence>
<gene>
    <name evidence="1" type="primary">rimM</name>
    <name type="ordered locus">EcolC_1075</name>
</gene>
<feature type="chain" id="PRO_1000074027" description="Ribosome maturation factor RimM">
    <location>
        <begin position="1"/>
        <end position="182"/>
    </location>
</feature>
<feature type="domain" description="PRC barrel" evidence="1">
    <location>
        <begin position="103"/>
        <end position="182"/>
    </location>
</feature>
<sequence length="182" mass="20605">MSKQLTAQAPVDPIVLGKMGSSYGIRGWLRVFSSTEDAESIFDYQPWFIQKAGQWQQVQLESWKHHNQDMIIKLKGVDDRDAANLLTNCEIVVDSSQLPQLEEGDYYWKDLMGCQVVTTEGYDLGKVVDMMETGSNDVLVIKANLKDAFGIKERLVPFLDGQVIKKVDLTTRSIEVDWDPGF</sequence>